<proteinExistence type="evidence at protein level"/>
<evidence type="ECO:0000250" key="1"/>
<evidence type="ECO:0000250" key="2">
    <source>
        <dbReference type="UniProtKB" id="Q9JMD1"/>
    </source>
</evidence>
<evidence type="ECO:0000256" key="3">
    <source>
        <dbReference type="SAM" id="MobiDB-lite"/>
    </source>
</evidence>
<evidence type="ECO:0000269" key="4">
    <source>
    </source>
</evidence>
<evidence type="ECO:0000305" key="5"/>
<evidence type="ECO:0007744" key="6">
    <source>
    </source>
</evidence>
<name>SMBT1_RAT</name>
<gene>
    <name type="primary">Sfmbt1</name>
</gene>
<reference key="1">
    <citation type="journal article" date="2000" name="Gene">
        <title>Cloning of a novel murine gene Sfmbt, Scm-related gene containing four mbt domains, structurally belonging to the Polycomb group of genes.</title>
        <authorList>
            <person name="Usui H."/>
            <person name="Ichikawa T."/>
            <person name="Kobayashi K."/>
            <person name="Kumanishi T."/>
        </authorList>
    </citation>
    <scope>NUCLEOTIDE SEQUENCE [MRNA]</scope>
    <scope>TISSUE SPECIFICITY</scope>
    <source>
        <strain>Sprague-Dawley</strain>
        <tissue>Brain</tissue>
    </source>
</reference>
<reference key="2">
    <citation type="journal article" date="2004" name="Genome Res.">
        <title>The status, quality, and expansion of the NIH full-length cDNA project: the Mammalian Gene Collection (MGC).</title>
        <authorList>
            <consortium name="The MGC Project Team"/>
        </authorList>
    </citation>
    <scope>NUCLEOTIDE SEQUENCE [LARGE SCALE MRNA]</scope>
    <source>
        <tissue>Testis</tissue>
    </source>
</reference>
<reference key="3">
    <citation type="journal article" date="2012" name="Nat. Commun.">
        <title>Quantitative maps of protein phosphorylation sites across 14 different rat organs and tissues.</title>
        <authorList>
            <person name="Lundby A."/>
            <person name="Secher A."/>
            <person name="Lage K."/>
            <person name="Nordsborg N.B."/>
            <person name="Dmytriyev A."/>
            <person name="Lundby C."/>
            <person name="Olsen J.V."/>
        </authorList>
    </citation>
    <scope>PHOSPHORYLATION [LARGE SCALE ANALYSIS] AT SER-764 AND SER-772</scope>
    <scope>IDENTIFICATION BY MASS SPECTROMETRY [LARGE SCALE ANALYSIS]</scope>
</reference>
<dbReference type="EMBL" id="AB032164">
    <property type="protein sequence ID" value="BAA96304.1"/>
    <property type="molecule type" value="mRNA"/>
</dbReference>
<dbReference type="EMBL" id="BC081770">
    <property type="protein sequence ID" value="AAH81770.1"/>
    <property type="molecule type" value="mRNA"/>
</dbReference>
<dbReference type="RefSeq" id="NP_113835.2">
    <property type="nucleotide sequence ID" value="NM_031647.2"/>
</dbReference>
<dbReference type="RefSeq" id="XP_006252718.1">
    <property type="nucleotide sequence ID" value="XM_006252656.3"/>
</dbReference>
<dbReference type="RefSeq" id="XP_006252719.1">
    <property type="nucleotide sequence ID" value="XM_006252657.3"/>
</dbReference>
<dbReference type="RefSeq" id="XP_006252720.1">
    <property type="nucleotide sequence ID" value="XM_006252658.4"/>
</dbReference>
<dbReference type="RefSeq" id="XP_008769225.1">
    <property type="nucleotide sequence ID" value="XM_008771003.2"/>
</dbReference>
<dbReference type="RefSeq" id="XP_008769226.1">
    <property type="nucleotide sequence ID" value="XM_008771004.2"/>
</dbReference>
<dbReference type="RefSeq" id="XP_008769227.1">
    <property type="nucleotide sequence ID" value="XM_008771005.2"/>
</dbReference>
<dbReference type="RefSeq" id="XP_008769228.1">
    <property type="nucleotide sequence ID" value="XM_008771006.4"/>
</dbReference>
<dbReference type="RefSeq" id="XP_017455728.1">
    <property type="nucleotide sequence ID" value="XM_017600239.1"/>
</dbReference>
<dbReference type="RefSeq" id="XP_038950728.1">
    <property type="nucleotide sequence ID" value="XM_039094800.2"/>
</dbReference>
<dbReference type="RefSeq" id="XP_038950729.1">
    <property type="nucleotide sequence ID" value="XM_039094801.2"/>
</dbReference>
<dbReference type="RefSeq" id="XP_038950730.1">
    <property type="nucleotide sequence ID" value="XM_039094802.2"/>
</dbReference>
<dbReference type="RefSeq" id="XP_063131745.1">
    <property type="nucleotide sequence ID" value="XM_063275675.1"/>
</dbReference>
<dbReference type="RefSeq" id="XP_063131746.1">
    <property type="nucleotide sequence ID" value="XM_063275676.1"/>
</dbReference>
<dbReference type="RefSeq" id="XP_063131747.1">
    <property type="nucleotide sequence ID" value="XM_063275677.1"/>
</dbReference>
<dbReference type="RefSeq" id="XP_063131748.1">
    <property type="nucleotide sequence ID" value="XM_063275678.1"/>
</dbReference>
<dbReference type="RefSeq" id="XP_063131750.1">
    <property type="nucleotide sequence ID" value="XM_063275680.1"/>
</dbReference>
<dbReference type="RefSeq" id="XP_063131751.1">
    <property type="nucleotide sequence ID" value="XM_063275681.1"/>
</dbReference>
<dbReference type="SMR" id="Q9JMD2"/>
<dbReference type="FunCoup" id="Q9JMD2">
    <property type="interactions" value="364"/>
</dbReference>
<dbReference type="STRING" id="10116.ENSRNOP00000022865"/>
<dbReference type="GlyGen" id="Q9JMD2">
    <property type="glycosylation" value="1 site"/>
</dbReference>
<dbReference type="iPTMnet" id="Q9JMD2"/>
<dbReference type="PhosphoSitePlus" id="Q9JMD2"/>
<dbReference type="PaxDb" id="10116-ENSRNOP00000022865"/>
<dbReference type="Ensembl" id="ENSRNOT00000022865.6">
    <property type="protein sequence ID" value="ENSRNOP00000022865.4"/>
    <property type="gene ID" value="ENSRNOG00000016645.6"/>
</dbReference>
<dbReference type="GeneID" id="58967"/>
<dbReference type="KEGG" id="rno:58967"/>
<dbReference type="UCSC" id="RGD:61999">
    <property type="organism name" value="rat"/>
</dbReference>
<dbReference type="AGR" id="RGD:61999"/>
<dbReference type="CTD" id="51460"/>
<dbReference type="RGD" id="61999">
    <property type="gene designation" value="Sfmbt1"/>
</dbReference>
<dbReference type="eggNOG" id="KOG3766">
    <property type="taxonomic scope" value="Eukaryota"/>
</dbReference>
<dbReference type="GeneTree" id="ENSGT00940000157363"/>
<dbReference type="HOGENOM" id="CLU_005352_0_0_1"/>
<dbReference type="InParanoid" id="Q9JMD2"/>
<dbReference type="OMA" id="HWSLKNG"/>
<dbReference type="OrthoDB" id="5917609at2759"/>
<dbReference type="PhylomeDB" id="Q9JMD2"/>
<dbReference type="TreeFam" id="TF316498"/>
<dbReference type="PRO" id="PR:Q9JMD2"/>
<dbReference type="Proteomes" id="UP000002494">
    <property type="component" value="Chromosome 16"/>
</dbReference>
<dbReference type="Bgee" id="ENSRNOG00000016645">
    <property type="expression patterns" value="Expressed in testis and 18 other cell types or tissues"/>
</dbReference>
<dbReference type="GO" id="GO:0005654">
    <property type="term" value="C:nucleoplasm"/>
    <property type="evidence" value="ECO:0007669"/>
    <property type="project" value="Ensembl"/>
</dbReference>
<dbReference type="GO" id="GO:0005634">
    <property type="term" value="C:nucleus"/>
    <property type="evidence" value="ECO:0000250"/>
    <property type="project" value="UniProtKB"/>
</dbReference>
<dbReference type="GO" id="GO:0003682">
    <property type="term" value="F:chromatin binding"/>
    <property type="evidence" value="ECO:0000318"/>
    <property type="project" value="GO_Central"/>
</dbReference>
<dbReference type="GO" id="GO:0042393">
    <property type="term" value="F:histone binding"/>
    <property type="evidence" value="ECO:0000250"/>
    <property type="project" value="UniProtKB"/>
</dbReference>
<dbReference type="GO" id="GO:0003714">
    <property type="term" value="F:transcription corepressor activity"/>
    <property type="evidence" value="ECO:0007669"/>
    <property type="project" value="InterPro"/>
</dbReference>
<dbReference type="GO" id="GO:0030154">
    <property type="term" value="P:cell differentiation"/>
    <property type="evidence" value="ECO:0007669"/>
    <property type="project" value="UniProtKB-KW"/>
</dbReference>
<dbReference type="GO" id="GO:0006325">
    <property type="term" value="P:chromatin organization"/>
    <property type="evidence" value="ECO:0007669"/>
    <property type="project" value="UniProtKB-KW"/>
</dbReference>
<dbReference type="GO" id="GO:0045892">
    <property type="term" value="P:negative regulation of DNA-templated transcription"/>
    <property type="evidence" value="ECO:0000250"/>
    <property type="project" value="UniProtKB"/>
</dbReference>
<dbReference type="GO" id="GO:0048635">
    <property type="term" value="P:negative regulation of muscle organ development"/>
    <property type="evidence" value="ECO:0000250"/>
    <property type="project" value="UniProtKB"/>
</dbReference>
<dbReference type="GO" id="GO:0007283">
    <property type="term" value="P:spermatogenesis"/>
    <property type="evidence" value="ECO:0007669"/>
    <property type="project" value="UniProtKB-KW"/>
</dbReference>
<dbReference type="CDD" id="cd20113">
    <property type="entry name" value="MBT_SFMBT1_rpt2"/>
    <property type="match status" value="1"/>
</dbReference>
<dbReference type="CDD" id="cd20115">
    <property type="entry name" value="MBT_SFMBT1_rpt3"/>
    <property type="match status" value="1"/>
</dbReference>
<dbReference type="CDD" id="cd09581">
    <property type="entry name" value="SAM_Scm-like-4MBT1_2"/>
    <property type="match status" value="1"/>
</dbReference>
<dbReference type="FunFam" id="2.30.30.140:FF:000010">
    <property type="entry name" value="MBT domain-containing protein 1 isoform X1"/>
    <property type="match status" value="1"/>
</dbReference>
<dbReference type="FunFam" id="2.30.30.140:FF:000072">
    <property type="entry name" value="Scm like with four mbt domains 2"/>
    <property type="match status" value="1"/>
</dbReference>
<dbReference type="FunFam" id="3.90.1150.190:FF:000002">
    <property type="entry name" value="Scm-like with four MBT domains protein 2"/>
    <property type="match status" value="1"/>
</dbReference>
<dbReference type="FunFam" id="1.10.150.50:FF:000027">
    <property type="entry name" value="scm-like with four MBT domains protein 2"/>
    <property type="match status" value="1"/>
</dbReference>
<dbReference type="Gene3D" id="2.30.30.140">
    <property type="match status" value="4"/>
</dbReference>
<dbReference type="Gene3D" id="3.90.1150.190">
    <property type="entry name" value="SLED domain"/>
    <property type="match status" value="1"/>
</dbReference>
<dbReference type="Gene3D" id="1.10.150.50">
    <property type="entry name" value="Transcription Factor, Ets-1"/>
    <property type="match status" value="1"/>
</dbReference>
<dbReference type="InterPro" id="IPR004092">
    <property type="entry name" value="Mbt"/>
</dbReference>
<dbReference type="InterPro" id="IPR047352">
    <property type="entry name" value="MBT_SFMBT1_rpt2"/>
</dbReference>
<dbReference type="InterPro" id="IPR047351">
    <property type="entry name" value="MBT_SFMBT1_rpt3"/>
</dbReference>
<dbReference type="InterPro" id="IPR050548">
    <property type="entry name" value="PcG_chromatin_remod_factors"/>
</dbReference>
<dbReference type="InterPro" id="IPR001660">
    <property type="entry name" value="SAM"/>
</dbReference>
<dbReference type="InterPro" id="IPR013761">
    <property type="entry name" value="SAM/pointed_sf"/>
</dbReference>
<dbReference type="InterPro" id="IPR037604">
    <property type="entry name" value="Scm-like-4MBT1/2_SAM"/>
</dbReference>
<dbReference type="InterPro" id="IPR021987">
    <property type="entry name" value="SLED"/>
</dbReference>
<dbReference type="InterPro" id="IPR038348">
    <property type="entry name" value="SLED_sf"/>
</dbReference>
<dbReference type="PANTHER" id="PTHR12247">
    <property type="entry name" value="POLYCOMB GROUP PROTEIN"/>
    <property type="match status" value="1"/>
</dbReference>
<dbReference type="PANTHER" id="PTHR12247:SF77">
    <property type="entry name" value="SCM-LIKE WITH FOUR MBT DOMAINS PROTEIN 1"/>
    <property type="match status" value="1"/>
</dbReference>
<dbReference type="Pfam" id="PF02820">
    <property type="entry name" value="MBT"/>
    <property type="match status" value="4"/>
</dbReference>
<dbReference type="Pfam" id="PF00536">
    <property type="entry name" value="SAM_1"/>
    <property type="match status" value="1"/>
</dbReference>
<dbReference type="Pfam" id="PF12140">
    <property type="entry name" value="SLED"/>
    <property type="match status" value="1"/>
</dbReference>
<dbReference type="SMART" id="SM00561">
    <property type="entry name" value="MBT"/>
    <property type="match status" value="4"/>
</dbReference>
<dbReference type="SMART" id="SM00454">
    <property type="entry name" value="SAM"/>
    <property type="match status" value="1"/>
</dbReference>
<dbReference type="SUPFAM" id="SSF47769">
    <property type="entry name" value="SAM/Pointed domain"/>
    <property type="match status" value="1"/>
</dbReference>
<dbReference type="SUPFAM" id="SSF63748">
    <property type="entry name" value="Tudor/PWWP/MBT"/>
    <property type="match status" value="4"/>
</dbReference>
<dbReference type="PROSITE" id="PS51079">
    <property type="entry name" value="MBT"/>
    <property type="match status" value="4"/>
</dbReference>
<protein>
    <recommendedName>
        <fullName>Scm-like with four MBT domains protein 1</fullName>
    </recommendedName>
</protein>
<accession>Q9JMD2</accession>
<accession>Q66HN3</accession>
<organism>
    <name type="scientific">Rattus norvegicus</name>
    <name type="common">Rat</name>
    <dbReference type="NCBI Taxonomy" id="10116"/>
    <lineage>
        <taxon>Eukaryota</taxon>
        <taxon>Metazoa</taxon>
        <taxon>Chordata</taxon>
        <taxon>Craniata</taxon>
        <taxon>Vertebrata</taxon>
        <taxon>Euteleostomi</taxon>
        <taxon>Mammalia</taxon>
        <taxon>Eutheria</taxon>
        <taxon>Euarchontoglires</taxon>
        <taxon>Glires</taxon>
        <taxon>Rodentia</taxon>
        <taxon>Myomorpha</taxon>
        <taxon>Muroidea</taxon>
        <taxon>Muridae</taxon>
        <taxon>Murinae</taxon>
        <taxon>Rattus</taxon>
    </lineage>
</organism>
<feature type="chain" id="PRO_0000071968" description="Scm-like with four MBT domains protein 1">
    <location>
        <begin position="1"/>
        <end position="863"/>
    </location>
</feature>
<feature type="repeat" description="MBT 1">
    <location>
        <begin position="20"/>
        <end position="120"/>
    </location>
</feature>
<feature type="repeat" description="MBT 2">
    <location>
        <begin position="128"/>
        <end position="232"/>
    </location>
</feature>
<feature type="repeat" description="MBT 3">
    <location>
        <begin position="242"/>
        <end position="346"/>
    </location>
</feature>
<feature type="repeat" description="MBT 4">
    <location>
        <begin position="354"/>
        <end position="451"/>
    </location>
</feature>
<feature type="domain" description="SAM">
    <location>
        <begin position="793"/>
        <end position="861"/>
    </location>
</feature>
<feature type="region of interest" description="Disordered" evidence="3">
    <location>
        <begin position="638"/>
        <end position="773"/>
    </location>
</feature>
<feature type="compositionally biased region" description="Basic residues" evidence="3">
    <location>
        <begin position="660"/>
        <end position="679"/>
    </location>
</feature>
<feature type="compositionally biased region" description="Polar residues" evidence="3">
    <location>
        <begin position="680"/>
        <end position="691"/>
    </location>
</feature>
<feature type="compositionally biased region" description="Acidic residues" evidence="3">
    <location>
        <begin position="696"/>
        <end position="710"/>
    </location>
</feature>
<feature type="modified residue" description="Phosphoserine" evidence="6">
    <location>
        <position position="764"/>
    </location>
</feature>
<feature type="modified residue" description="Phosphoserine" evidence="6">
    <location>
        <position position="772"/>
    </location>
</feature>
<feature type="sequence conflict" description="In Ref. 1; BAA96304." evidence="5" ref="1">
    <original>Q</original>
    <variation>H</variation>
    <location>
        <position position="195"/>
    </location>
</feature>
<keyword id="KW-0156">Chromatin regulator</keyword>
<keyword id="KW-0221">Differentiation</keyword>
<keyword id="KW-0539">Nucleus</keyword>
<keyword id="KW-0597">Phosphoprotein</keyword>
<keyword id="KW-1185">Reference proteome</keyword>
<keyword id="KW-0677">Repeat</keyword>
<keyword id="KW-0678">Repressor</keyword>
<keyword id="KW-0744">Spermatogenesis</keyword>
<keyword id="KW-0804">Transcription</keyword>
<keyword id="KW-0805">Transcription regulation</keyword>
<sequence>MNGEQQLDADLGSGVEVEEFSWEDYLEETGATTAPYASFKHVDICLQSGFAPGMKLEVALRKDPETYWVATVITACEQLLLLRYEGYGEDRKADFWCDIRRAGLYPIGWCQQNKKTLEAPEGIRDKVSDWSAFLQRTLTGACGPPVALLEGLRNGRNPLDLIAPGSRLECQDFRDSVSTWIVTVVENIGGRLKLQYEGLERHDGFEHWLYYLDPFLHHIGWAAQQGYELQPPLAIRHLKNEADWQEILARVKEEEPLPSYLFKDKQVIRTHEFSINMKLEAVDPWSPFGISPATIAKVFDDKYFLVEIDDLRPEDHARRSFVCHANSPGIFPVQWSLKNGLHINPPPGFRSQDFDWADYLKQCGAEAAPQKCFPQSVSEHQFKENMKLEAVNPLFPEEVSIATVTAVRGSYLWLQLEGSKKPVPEFIVSVESMNIFPLGWCETNGHPLSTPRRARGHKLRKIAVVQPEKQILSSRTVHEGLKNQLNSPHSVMINGKYCCPKIYFNHRCFSGPYLNKGRIAELPQCVGPGNCVLVLREVLTLLINAAYKPSRVLRELQLDKDSVWHGCGEVLKAKYKGKSYRATVEIVRTADRVTEFCRQTCIKLECCPNLFGPRMVLDTCSENCSVLTKTKYTHYYGKKKNKRIGRPPGGHSNLSCALKKTSKRRKRRKNIFVHKKKRSSASVDNTPVGSPQGSGGEDEDDADDGDDDSLTEGSTSEQQDELHEESEVSEKKSCSPSPTQSEMSTPLPPDTQTDKREAQTSSLSDGENKPPSPKEIRIEVDERLHLDSNPLKWSVADVVRFIRSTDCAPLARIFLDQEIDGQALLLLTLPTVQECMDLKLGPAIKLCHHIERIKFAFYEQFAN</sequence>
<comment type="function">
    <text evidence="1">Histone-binding protein, which is part of various corepressor complexes. Mediates the recruitment of corepressor complexes to target genes, followed by chromatin compaction and repression of transcription. Plays a role during myogenesis: required for the maintenance of undifferentiated states of myogenic progenitor cells via interaction with MYOD1. Interaction with MYOD1 leads to the recruitment of associated corepressors and silencing of MYOD1 target genes. Part of the SLC complex in germ cells, where it may play a role during spermatogenesis (By similarity).</text>
</comment>
<comment type="subunit">
    <text evidence="2">Interacts with MYOD1 (By similarity). Component of the SLC (SFMBT1-LSD1-CoREST) corepressor complex, which also contains KDM1A/LSD1 and RCOR1/CoREST. Interacts with KDM1A/LSD1 and RCOR1/CoREST. Interacts with MYOD1 (By similarity). Interacts with L3MBTL3 (By similarity).</text>
</comment>
<comment type="subcellular location">
    <subcellularLocation>
        <location evidence="1">Nucleus</location>
    </subcellularLocation>
</comment>
<comment type="tissue specificity">
    <text evidence="4">Highly expressed in the testis, low expression was detected in brain, kidney, heart and lung.</text>
</comment>
<comment type="domain">
    <text evidence="1">The MBT repeats mediate binding to histones tails; however, in contrast to other MBT repeats, does not bind specific histone lysine modifications. The MBT repeats lack the conserved Asp and aromatic cage at conserved positions (By similarity).</text>
</comment>